<evidence type="ECO:0000255" key="1"/>
<evidence type="ECO:0000269" key="2">
    <source>
    </source>
</evidence>
<evidence type="ECO:0000269" key="3">
    <source>
    </source>
</evidence>
<evidence type="ECO:0000269" key="4">
    <source>
    </source>
</evidence>
<evidence type="ECO:0000303" key="5">
    <source>
    </source>
</evidence>
<evidence type="ECO:0000303" key="6">
    <source>
    </source>
</evidence>
<evidence type="ECO:0000305" key="7"/>
<evidence type="ECO:0000312" key="8">
    <source>
        <dbReference type="HGNC" id="HGNC:31723"/>
    </source>
</evidence>
<accession>Q24JQ0</accession>
<accession>I0J130</accession>
<accession>Q6ZTS7</accession>
<accession>Q6ZW41</accession>
<gene>
    <name evidence="8" type="primary">TMEM241</name>
    <name type="synonym">C18orf45</name>
</gene>
<proteinExistence type="evidence at protein level"/>
<protein>
    <recommendedName>
        <fullName evidence="7">UDP-N-acetylglucosamine transporter TMEM241</fullName>
    </recommendedName>
    <alternativeName>
        <fullName evidence="8">Solute carrier family 35 member D4</fullName>
    </alternativeName>
    <alternativeName>
        <fullName>Transmembrane protein 241</fullName>
    </alternativeName>
</protein>
<keyword id="KW-0025">Alternative splicing</keyword>
<keyword id="KW-0333">Golgi apparatus</keyword>
<keyword id="KW-0472">Membrane</keyword>
<keyword id="KW-1185">Reference proteome</keyword>
<keyword id="KW-0762">Sugar transport</keyword>
<keyword id="KW-0812">Transmembrane</keyword>
<keyword id="KW-1133">Transmembrane helix</keyword>
<keyword id="KW-0813">Transport</keyword>
<organism>
    <name type="scientific">Homo sapiens</name>
    <name type="common">Human</name>
    <dbReference type="NCBI Taxonomy" id="9606"/>
    <lineage>
        <taxon>Eukaryota</taxon>
        <taxon>Metazoa</taxon>
        <taxon>Chordata</taxon>
        <taxon>Craniata</taxon>
        <taxon>Vertebrata</taxon>
        <taxon>Euteleostomi</taxon>
        <taxon>Mammalia</taxon>
        <taxon>Eutheria</taxon>
        <taxon>Euarchontoglires</taxon>
        <taxon>Primates</taxon>
        <taxon>Haplorrhini</taxon>
        <taxon>Catarrhini</taxon>
        <taxon>Hominidae</taxon>
        <taxon>Homo</taxon>
    </lineage>
</organism>
<comment type="function">
    <text evidence="4">Golgi-localized UDP-N-acetylglucosamine (UDP-GlcNAc) transporter that transports UDP-N-acetylglucosamine into Golgi lumen. Contributes to lysosomal targeting of NPC2, a key protein required for lysosomal cholesterol exiting, and that utilizes the mannose-6-phosphate (M6P) modification pathway for its lysosomal targeting.</text>
</comment>
<comment type="interaction">
    <interactant intactId="EBI-18172866">
        <id>Q24JQ0</id>
    </interactant>
    <interactant intactId="EBI-3221827">
        <id>O15400</id>
        <label>STX7</label>
    </interactant>
    <organismsDiffer>false</organismsDiffer>
    <experiments>3</experiments>
</comment>
<comment type="subcellular location">
    <subcellularLocation>
        <location evidence="4">Golgi apparatus</location>
        <location evidence="4">cis-Golgi network membrane</location>
        <topology evidence="1">Multi-pass membrane protein</topology>
    </subcellularLocation>
</comment>
<comment type="alternative products">
    <event type="alternative splicing"/>
    <isoform>
        <id>Q24JQ0-1</id>
        <name>1</name>
        <sequence type="displayed"/>
    </isoform>
    <isoform>
        <id>Q24JQ0-2</id>
        <name>2</name>
        <sequence type="described" ref="VSP_028706 VSP_028708"/>
    </isoform>
    <isoform>
        <id>Q24JQ0-3</id>
        <name>3</name>
        <sequence type="described" ref="VSP_028704 VSP_028705 VSP_028707"/>
    </isoform>
</comment>
<comment type="induction">
    <text evidence="3">Up-regulated by inducers of the unfolded protein response (UPR), including tunicamycin and thapsigargin.</text>
</comment>
<comment type="miscellaneous">
    <molecule>Isoform 2</molecule>
    <text evidence="7">May be produced at very low levels due to a premature stop codon in the mRNA, leading to nonsense-mediated mRNA decay.</text>
</comment>
<comment type="miscellaneous">
    <molecule>Isoform 3</molecule>
    <text evidence="7">May be produced at very low levels due to a premature stop codon in the mRNA, leading to nonsense-mediated mRNA decay.</text>
</comment>
<comment type="similarity">
    <text evidence="7">Belongs to the nucleotide-sugar transporter family. SLC35A subfamily.</text>
</comment>
<reference key="1">
    <citation type="submission" date="2006-03" db="EMBL/GenBank/DDBJ databases">
        <title>Gene encoding similar protein to yeast sugar-nucleotide transporter, Vrg4p.</title>
        <authorList>
            <person name="Sawaki H."/>
            <person name="Kwon Y."/>
            <person name="Narimatsu H."/>
        </authorList>
    </citation>
    <scope>NUCLEOTIDE SEQUENCE [MRNA]</scope>
    <source>
        <tissue>Brain</tissue>
    </source>
</reference>
<reference key="2">
    <citation type="journal article" date="2004" name="Nat. Genet.">
        <title>Complete sequencing and characterization of 21,243 full-length human cDNAs.</title>
        <authorList>
            <person name="Ota T."/>
            <person name="Suzuki Y."/>
            <person name="Nishikawa T."/>
            <person name="Otsuki T."/>
            <person name="Sugiyama T."/>
            <person name="Irie R."/>
            <person name="Wakamatsu A."/>
            <person name="Hayashi K."/>
            <person name="Sato H."/>
            <person name="Nagai K."/>
            <person name="Kimura K."/>
            <person name="Makita H."/>
            <person name="Sekine M."/>
            <person name="Obayashi M."/>
            <person name="Nishi T."/>
            <person name="Shibahara T."/>
            <person name="Tanaka T."/>
            <person name="Ishii S."/>
            <person name="Yamamoto J."/>
            <person name="Saito K."/>
            <person name="Kawai Y."/>
            <person name="Isono Y."/>
            <person name="Nakamura Y."/>
            <person name="Nagahari K."/>
            <person name="Murakami K."/>
            <person name="Yasuda T."/>
            <person name="Iwayanagi T."/>
            <person name="Wagatsuma M."/>
            <person name="Shiratori A."/>
            <person name="Sudo H."/>
            <person name="Hosoiri T."/>
            <person name="Kaku Y."/>
            <person name="Kodaira H."/>
            <person name="Kondo H."/>
            <person name="Sugawara M."/>
            <person name="Takahashi M."/>
            <person name="Kanda K."/>
            <person name="Yokoi T."/>
            <person name="Furuya T."/>
            <person name="Kikkawa E."/>
            <person name="Omura Y."/>
            <person name="Abe K."/>
            <person name="Kamihara K."/>
            <person name="Katsuta N."/>
            <person name="Sato K."/>
            <person name="Tanikawa M."/>
            <person name="Yamazaki M."/>
            <person name="Ninomiya K."/>
            <person name="Ishibashi T."/>
            <person name="Yamashita H."/>
            <person name="Murakawa K."/>
            <person name="Fujimori K."/>
            <person name="Tanai H."/>
            <person name="Kimata M."/>
            <person name="Watanabe M."/>
            <person name="Hiraoka S."/>
            <person name="Chiba Y."/>
            <person name="Ishida S."/>
            <person name="Ono Y."/>
            <person name="Takiguchi S."/>
            <person name="Watanabe S."/>
            <person name="Yosida M."/>
            <person name="Hotuta T."/>
            <person name="Kusano J."/>
            <person name="Kanehori K."/>
            <person name="Takahashi-Fujii A."/>
            <person name="Hara H."/>
            <person name="Tanase T.-O."/>
            <person name="Nomura Y."/>
            <person name="Togiya S."/>
            <person name="Komai F."/>
            <person name="Hara R."/>
            <person name="Takeuchi K."/>
            <person name="Arita M."/>
            <person name="Imose N."/>
            <person name="Musashino K."/>
            <person name="Yuuki H."/>
            <person name="Oshima A."/>
            <person name="Sasaki N."/>
            <person name="Aotsuka S."/>
            <person name="Yoshikawa Y."/>
            <person name="Matsunawa H."/>
            <person name="Ichihara T."/>
            <person name="Shiohata N."/>
            <person name="Sano S."/>
            <person name="Moriya S."/>
            <person name="Momiyama H."/>
            <person name="Satoh N."/>
            <person name="Takami S."/>
            <person name="Terashima Y."/>
            <person name="Suzuki O."/>
            <person name="Nakagawa S."/>
            <person name="Senoh A."/>
            <person name="Mizoguchi H."/>
            <person name="Goto Y."/>
            <person name="Shimizu F."/>
            <person name="Wakebe H."/>
            <person name="Hishigaki H."/>
            <person name="Watanabe T."/>
            <person name="Sugiyama A."/>
            <person name="Takemoto M."/>
            <person name="Kawakami B."/>
            <person name="Yamazaki M."/>
            <person name="Watanabe K."/>
            <person name="Kumagai A."/>
            <person name="Itakura S."/>
            <person name="Fukuzumi Y."/>
            <person name="Fujimori Y."/>
            <person name="Komiyama M."/>
            <person name="Tashiro H."/>
            <person name="Tanigami A."/>
            <person name="Fujiwara T."/>
            <person name="Ono T."/>
            <person name="Yamada K."/>
            <person name="Fujii Y."/>
            <person name="Ozaki K."/>
            <person name="Hirao M."/>
            <person name="Ohmori Y."/>
            <person name="Kawabata A."/>
            <person name="Hikiji T."/>
            <person name="Kobatake N."/>
            <person name="Inagaki H."/>
            <person name="Ikema Y."/>
            <person name="Okamoto S."/>
            <person name="Okitani R."/>
            <person name="Kawakami T."/>
            <person name="Noguchi S."/>
            <person name="Itoh T."/>
            <person name="Shigeta K."/>
            <person name="Senba T."/>
            <person name="Matsumura K."/>
            <person name="Nakajima Y."/>
            <person name="Mizuno T."/>
            <person name="Morinaga M."/>
            <person name="Sasaki M."/>
            <person name="Togashi T."/>
            <person name="Oyama M."/>
            <person name="Hata H."/>
            <person name="Watanabe M."/>
            <person name="Komatsu T."/>
            <person name="Mizushima-Sugano J."/>
            <person name="Satoh T."/>
            <person name="Shirai Y."/>
            <person name="Takahashi Y."/>
            <person name="Nakagawa K."/>
            <person name="Okumura K."/>
            <person name="Nagase T."/>
            <person name="Nomura N."/>
            <person name="Kikuchi H."/>
            <person name="Masuho Y."/>
            <person name="Yamashita R."/>
            <person name="Nakai K."/>
            <person name="Yada T."/>
            <person name="Nakamura Y."/>
            <person name="Ohara O."/>
            <person name="Isogai T."/>
            <person name="Sugano S."/>
        </authorList>
    </citation>
    <scope>NUCLEOTIDE SEQUENCE [LARGE SCALE MRNA] (ISOFORMS 2 AND 3)</scope>
    <scope>VARIANT PHE-131</scope>
    <source>
        <tissue>Fibroblast</tissue>
        <tissue>Liver</tissue>
    </source>
</reference>
<reference key="3">
    <citation type="journal article" date="2005" name="Nature">
        <title>DNA sequence and analysis of human chromosome 18.</title>
        <authorList>
            <person name="Nusbaum C."/>
            <person name="Zody M.C."/>
            <person name="Borowsky M.L."/>
            <person name="Kamal M."/>
            <person name="Kodira C.D."/>
            <person name="Taylor T.D."/>
            <person name="Whittaker C.A."/>
            <person name="Chang J.L."/>
            <person name="Cuomo C.A."/>
            <person name="Dewar K."/>
            <person name="FitzGerald M.G."/>
            <person name="Yang X."/>
            <person name="Abouelleil A."/>
            <person name="Allen N.R."/>
            <person name="Anderson S."/>
            <person name="Bloom T."/>
            <person name="Bugalter B."/>
            <person name="Butler J."/>
            <person name="Cook A."/>
            <person name="DeCaprio D."/>
            <person name="Engels R."/>
            <person name="Garber M."/>
            <person name="Gnirke A."/>
            <person name="Hafez N."/>
            <person name="Hall J.L."/>
            <person name="Norman C.H."/>
            <person name="Itoh T."/>
            <person name="Jaffe D.B."/>
            <person name="Kuroki Y."/>
            <person name="Lehoczky J."/>
            <person name="Lui A."/>
            <person name="Macdonald P."/>
            <person name="Mauceli E."/>
            <person name="Mikkelsen T.S."/>
            <person name="Naylor J.W."/>
            <person name="Nicol R."/>
            <person name="Nguyen C."/>
            <person name="Noguchi H."/>
            <person name="O'Leary S.B."/>
            <person name="Piqani B."/>
            <person name="Smith C.L."/>
            <person name="Talamas J.A."/>
            <person name="Topham K."/>
            <person name="Totoki Y."/>
            <person name="Toyoda A."/>
            <person name="Wain H.M."/>
            <person name="Young S.K."/>
            <person name="Zeng Q."/>
            <person name="Zimmer A.R."/>
            <person name="Fujiyama A."/>
            <person name="Hattori M."/>
            <person name="Birren B.W."/>
            <person name="Sakaki Y."/>
            <person name="Lander E.S."/>
        </authorList>
    </citation>
    <scope>NUCLEOTIDE SEQUENCE [LARGE SCALE GENOMIC DNA]</scope>
</reference>
<reference key="4">
    <citation type="journal article" date="2004" name="Genome Res.">
        <title>The status, quality, and expansion of the NIH full-length cDNA project: the Mammalian Gene Collection (MGC).</title>
        <authorList>
            <consortium name="The MGC Project Team"/>
        </authorList>
    </citation>
    <scope>NUCLEOTIDE SEQUENCE [LARGE SCALE MRNA] (ISOFORMS 1 AND 2)</scope>
</reference>
<reference key="5">
    <citation type="journal article" date="2012" name="J. Biol. Chem.">
        <title>Hyperactivity of the Ero1alpha oxidase elicits endoplasmic reticulum stress but no broad antioxidant response.</title>
        <authorList>
            <person name="Hansen H.G."/>
            <person name="Schmidt J.D."/>
            <person name="Soltoft C.L."/>
            <person name="Ramming T."/>
            <person name="Geertz-Hansen H.M."/>
            <person name="Christensen B."/>
            <person name="Sorensen E.S."/>
            <person name="Juncker A.S."/>
            <person name="Appenzeller-Herzog C."/>
            <person name="Ellgaard L."/>
        </authorList>
    </citation>
    <scope>INDUCTION</scope>
</reference>
<reference key="6">
    <citation type="journal article" date="2023" name="J. Lipid Res.">
        <title>TMEM241 is a UDP-N-acetylglucosamine transporter required for M6P modification of NPC2 and cholesterol transport.</title>
        <authorList>
            <person name="Zhao N."/>
            <person name="Deng G."/>
            <person name="Yuan P.X."/>
            <person name="Zhang Y.F."/>
            <person name="Jiang L.Y."/>
            <person name="Zhao X."/>
            <person name="Song B.L."/>
        </authorList>
    </citation>
    <scope>SUBCELLULAR LOCATION</scope>
    <scope>FUNCTION</scope>
    <scope>TRANSPORTER ACTIVITY</scope>
</reference>
<name>TM241_HUMAN</name>
<feature type="chain" id="PRO_0000307316" description="UDP-N-acetylglucosamine transporter TMEM241">
    <location>
        <begin position="1"/>
        <end position="296"/>
    </location>
</feature>
<feature type="transmembrane region" description="Helical" evidence="1">
    <location>
        <begin position="7"/>
        <end position="29"/>
    </location>
</feature>
<feature type="transmembrane region" description="Helical" evidence="1">
    <location>
        <begin position="32"/>
        <end position="52"/>
    </location>
</feature>
<feature type="transmembrane region" description="Helical" evidence="1">
    <location>
        <begin position="67"/>
        <end position="87"/>
    </location>
</feature>
<feature type="transmembrane region" description="Helical" evidence="1">
    <location>
        <begin position="93"/>
        <end position="113"/>
    </location>
</feature>
<feature type="transmembrane region" description="Helical" evidence="1">
    <location>
        <begin position="121"/>
        <end position="141"/>
    </location>
</feature>
<feature type="transmembrane region" description="Helical" evidence="1">
    <location>
        <begin position="146"/>
        <end position="166"/>
    </location>
</feature>
<feature type="transmembrane region" description="Helical" evidence="1">
    <location>
        <begin position="187"/>
        <end position="207"/>
    </location>
</feature>
<feature type="transmembrane region" description="Helical" evidence="1">
    <location>
        <begin position="211"/>
        <end position="231"/>
    </location>
</feature>
<feature type="transmembrane region" description="Helical" evidence="1">
    <location>
        <begin position="250"/>
        <end position="270"/>
    </location>
</feature>
<feature type="transmembrane region" description="Helical" evidence="1">
    <location>
        <begin position="271"/>
        <end position="291"/>
    </location>
</feature>
<feature type="splice variant" id="VSP_028704" description="In isoform 3." evidence="5">
    <location>
        <begin position="41"/>
        <end position="66"/>
    </location>
</feature>
<feature type="splice variant" id="VSP_028705" description="In isoform 3." evidence="5">
    <original>SALLLLAAAGCLPFNDSQFNPD</original>
    <variation>RLHLERTRQNQTSRLSSCLKGD</variation>
    <location>
        <begin position="128"/>
        <end position="149"/>
    </location>
</feature>
<feature type="splice variant" id="VSP_028706" description="In isoform 2." evidence="5 6">
    <original>FNPDGYFWAIIHLL</original>
    <variation>GLIKFYRSPRNPVH</variation>
    <location>
        <begin position="146"/>
        <end position="159"/>
    </location>
</feature>
<feature type="splice variant" id="VSP_028707" description="In isoform 3." evidence="5">
    <location>
        <begin position="150"/>
        <end position="296"/>
    </location>
</feature>
<feature type="splice variant" id="VSP_028708" description="In isoform 2." evidence="5 6">
    <location>
        <begin position="160"/>
        <end position="296"/>
    </location>
</feature>
<feature type="sequence variant" id="VAR_035406" description="In dbSNP:rs8099409." evidence="2">
    <original>L</original>
    <variation>F</variation>
    <location>
        <position position="131"/>
    </location>
</feature>
<dbReference type="EMBL" id="AB253738">
    <property type="protein sequence ID" value="BAM11306.1"/>
    <property type="molecule type" value="mRNA"/>
</dbReference>
<dbReference type="EMBL" id="AK123623">
    <property type="protein sequence ID" value="BAC85665.1"/>
    <property type="molecule type" value="mRNA"/>
</dbReference>
<dbReference type="EMBL" id="AK126247">
    <property type="protein sequence ID" value="BAC86502.1"/>
    <property type="molecule type" value="mRNA"/>
</dbReference>
<dbReference type="EMBL" id="AC011731">
    <property type="status" value="NOT_ANNOTATED_CDS"/>
    <property type="molecule type" value="Genomic_DNA"/>
</dbReference>
<dbReference type="EMBL" id="AC026634">
    <property type="status" value="NOT_ANNOTATED_CDS"/>
    <property type="molecule type" value="Genomic_DNA"/>
</dbReference>
<dbReference type="EMBL" id="BC114510">
    <property type="protein sequence ID" value="AAI14511.1"/>
    <property type="molecule type" value="mRNA"/>
</dbReference>
<dbReference type="EMBL" id="BC114561">
    <property type="protein sequence ID" value="AAI14562.1"/>
    <property type="molecule type" value="mRNA"/>
</dbReference>
<dbReference type="CCDS" id="CCDS11876.2">
    <molecule id="Q24JQ0-1"/>
</dbReference>
<dbReference type="RefSeq" id="NP_116322.3">
    <molecule id="Q24JQ0-1"/>
    <property type="nucleotide sequence ID" value="NM_032933.5"/>
</dbReference>
<dbReference type="SMR" id="Q24JQ0"/>
<dbReference type="BioGRID" id="124432">
    <property type="interactions" value="7"/>
</dbReference>
<dbReference type="FunCoup" id="Q24JQ0">
    <property type="interactions" value="494"/>
</dbReference>
<dbReference type="IntAct" id="Q24JQ0">
    <property type="interactions" value="2"/>
</dbReference>
<dbReference type="STRING" id="9606.ENSP00000372720"/>
<dbReference type="TCDB" id="2.A.7.13.8">
    <property type="family name" value="the drug/metabolite transporter (dmt) superfamily"/>
</dbReference>
<dbReference type="iPTMnet" id="Q24JQ0"/>
<dbReference type="PhosphoSitePlus" id="Q24JQ0"/>
<dbReference type="BioMuta" id="TMEM241"/>
<dbReference type="DMDM" id="121940968"/>
<dbReference type="PaxDb" id="9606-ENSP00000372720"/>
<dbReference type="PeptideAtlas" id="Q24JQ0"/>
<dbReference type="Antibodypedia" id="54177">
    <property type="antibodies" value="26 antibodies from 11 providers"/>
</dbReference>
<dbReference type="DNASU" id="85019"/>
<dbReference type="Ensembl" id="ENST00000383233.8">
    <molecule id="Q24JQ0-1"/>
    <property type="protein sequence ID" value="ENSP00000372720.3"/>
    <property type="gene ID" value="ENSG00000134490.14"/>
</dbReference>
<dbReference type="Ensembl" id="ENST00000473688.5">
    <molecule id="Q24JQ0-2"/>
    <property type="protein sequence ID" value="ENSP00000431584.1"/>
    <property type="gene ID" value="ENSG00000134490.14"/>
</dbReference>
<dbReference type="Ensembl" id="ENST00000477053.5">
    <molecule id="Q24JQ0-3"/>
    <property type="protein sequence ID" value="ENSP00000437280.1"/>
    <property type="gene ID" value="ENSG00000134490.14"/>
</dbReference>
<dbReference type="GeneID" id="85019"/>
<dbReference type="KEGG" id="hsa:85019"/>
<dbReference type="MANE-Select" id="ENST00000383233.8">
    <property type="protein sequence ID" value="ENSP00000372720.3"/>
    <property type="RefSeq nucleotide sequence ID" value="NM_032933.6"/>
    <property type="RefSeq protein sequence ID" value="NP_116322.3"/>
</dbReference>
<dbReference type="UCSC" id="uc002kuf.4">
    <molecule id="Q24JQ0-1"/>
    <property type="organism name" value="human"/>
</dbReference>
<dbReference type="AGR" id="HGNC:31723"/>
<dbReference type="CTD" id="85019"/>
<dbReference type="DisGeNET" id="85019"/>
<dbReference type="GeneCards" id="TMEM241"/>
<dbReference type="HGNC" id="HGNC:31723">
    <property type="gene designation" value="TMEM241"/>
</dbReference>
<dbReference type="HPA" id="ENSG00000134490">
    <property type="expression patterns" value="Low tissue specificity"/>
</dbReference>
<dbReference type="MIM" id="615430">
    <property type="type" value="gene"/>
</dbReference>
<dbReference type="neXtProt" id="NX_Q24JQ0"/>
<dbReference type="OpenTargets" id="ENSG00000134490"/>
<dbReference type="PharmGKB" id="PA134952915"/>
<dbReference type="VEuPathDB" id="HostDB:ENSG00000134490"/>
<dbReference type="eggNOG" id="KOG1444">
    <property type="taxonomic scope" value="Eukaryota"/>
</dbReference>
<dbReference type="GeneTree" id="ENSGT00510000048348"/>
<dbReference type="HOGENOM" id="CLU_081157_0_0_1"/>
<dbReference type="InParanoid" id="Q24JQ0"/>
<dbReference type="OMA" id="WAIIHLF"/>
<dbReference type="OrthoDB" id="417037at2759"/>
<dbReference type="PAN-GO" id="Q24JQ0">
    <property type="GO annotations" value="2 GO annotations based on evolutionary models"/>
</dbReference>
<dbReference type="PhylomeDB" id="Q24JQ0"/>
<dbReference type="TreeFam" id="TF338291"/>
<dbReference type="PathwayCommons" id="Q24JQ0"/>
<dbReference type="SignaLink" id="Q24JQ0"/>
<dbReference type="BioGRID-ORCS" id="85019">
    <property type="hits" value="12 hits in 1159 CRISPR screens"/>
</dbReference>
<dbReference type="ChiTaRS" id="TMEM241">
    <property type="organism name" value="human"/>
</dbReference>
<dbReference type="GenomeRNAi" id="85019"/>
<dbReference type="Pharos" id="Q24JQ0">
    <property type="development level" value="Tdark"/>
</dbReference>
<dbReference type="PRO" id="PR:Q24JQ0"/>
<dbReference type="Proteomes" id="UP000005640">
    <property type="component" value="Chromosome 18"/>
</dbReference>
<dbReference type="RNAct" id="Q24JQ0">
    <property type="molecule type" value="protein"/>
</dbReference>
<dbReference type="Bgee" id="ENSG00000134490">
    <property type="expression patterns" value="Expressed in buccal mucosa cell and 198 other cell types or tissues"/>
</dbReference>
<dbReference type="ExpressionAtlas" id="Q24JQ0">
    <property type="expression patterns" value="baseline and differential"/>
</dbReference>
<dbReference type="GO" id="GO:0005794">
    <property type="term" value="C:Golgi apparatus"/>
    <property type="evidence" value="ECO:0000314"/>
    <property type="project" value="UniProtKB"/>
</dbReference>
<dbReference type="GO" id="GO:0016020">
    <property type="term" value="C:membrane"/>
    <property type="evidence" value="ECO:0007669"/>
    <property type="project" value="UniProtKB-KW"/>
</dbReference>
<dbReference type="GO" id="GO:0015297">
    <property type="term" value="F:antiporter activity"/>
    <property type="evidence" value="ECO:0000318"/>
    <property type="project" value="GO_Central"/>
</dbReference>
<dbReference type="GO" id="GO:0005458">
    <property type="term" value="F:GDP-mannose transmembrane transporter activity"/>
    <property type="evidence" value="ECO:0000318"/>
    <property type="project" value="GO_Central"/>
</dbReference>
<dbReference type="GO" id="GO:0005462">
    <property type="term" value="F:UDP-N-acetylglucosamine transmembrane transporter activity"/>
    <property type="evidence" value="ECO:0000315"/>
    <property type="project" value="UniProtKB"/>
</dbReference>
<dbReference type="GO" id="GO:1990570">
    <property type="term" value="P:GDP-mannose transmembrane transport"/>
    <property type="evidence" value="ECO:0000318"/>
    <property type="project" value="GO_Central"/>
</dbReference>
<dbReference type="GO" id="GO:1990569">
    <property type="term" value="P:UDP-N-acetylglucosamine transmembrane transport"/>
    <property type="evidence" value="ECO:0000315"/>
    <property type="project" value="UniProtKB"/>
</dbReference>
<dbReference type="InterPro" id="IPR050186">
    <property type="entry name" value="TPT_transporter"/>
</dbReference>
<dbReference type="PANTHER" id="PTHR11132">
    <property type="entry name" value="SOLUTE CARRIER FAMILY 35"/>
    <property type="match status" value="1"/>
</dbReference>
<sequence length="296" mass="32647">MCVRRSLVGLTFCTCYLASYLTNKYVLSVLKFTYPTLFQGWQTLIGGLLLHVSWKLGWVEINSSSRSHVLVWLPASVLFVGIIYAGSRALSRLAIPVFLTLHNVAEVIICGYQKCFQKEKTSPAKICSALLLLAAAGCLPFNDSQFNPDGYFWAIIHLLCVGAYKILQKSQKPSALSDIDQQYLNYIFSVVLLAFASHPTGDLFSVLDFPFLYFYRFHGSCCASGFLGFFLMFSTVKLKNLLAPGQCAAWIFFAKIITAGLSILLFDAILTSATTGCLLLGALGEALLVFSERKSS</sequence>